<dbReference type="EC" id="3.6.1.9" evidence="1"/>
<dbReference type="EMBL" id="CP000090">
    <property type="protein sequence ID" value="AAZ61889.1"/>
    <property type="molecule type" value="Genomic_DNA"/>
</dbReference>
<dbReference type="SMR" id="Q46Y94"/>
<dbReference type="STRING" id="264198.Reut_A2528"/>
<dbReference type="KEGG" id="reu:Reut_A2528"/>
<dbReference type="eggNOG" id="COG0424">
    <property type="taxonomic scope" value="Bacteria"/>
</dbReference>
<dbReference type="HOGENOM" id="CLU_040416_2_1_4"/>
<dbReference type="OrthoDB" id="9807767at2"/>
<dbReference type="GO" id="GO:0005737">
    <property type="term" value="C:cytoplasm"/>
    <property type="evidence" value="ECO:0007669"/>
    <property type="project" value="UniProtKB-SubCell"/>
</dbReference>
<dbReference type="GO" id="GO:0036218">
    <property type="term" value="F:dTTP diphosphatase activity"/>
    <property type="evidence" value="ECO:0007669"/>
    <property type="project" value="RHEA"/>
</dbReference>
<dbReference type="GO" id="GO:0036221">
    <property type="term" value="F:UTP diphosphatase activity"/>
    <property type="evidence" value="ECO:0007669"/>
    <property type="project" value="RHEA"/>
</dbReference>
<dbReference type="GO" id="GO:0009117">
    <property type="term" value="P:nucleotide metabolic process"/>
    <property type="evidence" value="ECO:0007669"/>
    <property type="project" value="UniProtKB-KW"/>
</dbReference>
<dbReference type="CDD" id="cd00555">
    <property type="entry name" value="Maf"/>
    <property type="match status" value="1"/>
</dbReference>
<dbReference type="Gene3D" id="3.90.950.10">
    <property type="match status" value="1"/>
</dbReference>
<dbReference type="HAMAP" id="MF_00528">
    <property type="entry name" value="Maf"/>
    <property type="match status" value="1"/>
</dbReference>
<dbReference type="InterPro" id="IPR029001">
    <property type="entry name" value="ITPase-like_fam"/>
</dbReference>
<dbReference type="InterPro" id="IPR003697">
    <property type="entry name" value="Maf-like"/>
</dbReference>
<dbReference type="NCBIfam" id="TIGR00172">
    <property type="entry name" value="maf"/>
    <property type="match status" value="1"/>
</dbReference>
<dbReference type="PANTHER" id="PTHR43213">
    <property type="entry name" value="BIFUNCTIONAL DTTP/UTP PYROPHOSPHATASE/METHYLTRANSFERASE PROTEIN-RELATED"/>
    <property type="match status" value="1"/>
</dbReference>
<dbReference type="PANTHER" id="PTHR43213:SF5">
    <property type="entry name" value="BIFUNCTIONAL DTTP_UTP PYROPHOSPHATASE_METHYLTRANSFERASE PROTEIN-RELATED"/>
    <property type="match status" value="1"/>
</dbReference>
<dbReference type="Pfam" id="PF02545">
    <property type="entry name" value="Maf"/>
    <property type="match status" value="1"/>
</dbReference>
<dbReference type="PIRSF" id="PIRSF006305">
    <property type="entry name" value="Maf"/>
    <property type="match status" value="1"/>
</dbReference>
<dbReference type="SUPFAM" id="SSF52972">
    <property type="entry name" value="ITPase-like"/>
    <property type="match status" value="1"/>
</dbReference>
<organism>
    <name type="scientific">Cupriavidus pinatubonensis (strain JMP 134 / LMG 1197)</name>
    <name type="common">Cupriavidus necator (strain JMP 134)</name>
    <dbReference type="NCBI Taxonomy" id="264198"/>
    <lineage>
        <taxon>Bacteria</taxon>
        <taxon>Pseudomonadati</taxon>
        <taxon>Pseudomonadota</taxon>
        <taxon>Betaproteobacteria</taxon>
        <taxon>Burkholderiales</taxon>
        <taxon>Burkholderiaceae</taxon>
        <taxon>Cupriavidus</taxon>
    </lineage>
</organism>
<name>NTPPA_CUPPJ</name>
<evidence type="ECO:0000255" key="1">
    <source>
        <dbReference type="HAMAP-Rule" id="MF_00528"/>
    </source>
</evidence>
<gene>
    <name type="ordered locus">Reut_A2528</name>
</gene>
<accession>Q46Y94</accession>
<proteinExistence type="inferred from homology"/>
<keyword id="KW-0963">Cytoplasm</keyword>
<keyword id="KW-0378">Hydrolase</keyword>
<keyword id="KW-0546">Nucleotide metabolism</keyword>
<feature type="chain" id="PRO_0000267388" description="dTTP/UTP pyrophosphatase">
    <location>
        <begin position="1"/>
        <end position="200"/>
    </location>
</feature>
<feature type="active site" description="Proton acceptor" evidence="1">
    <location>
        <position position="81"/>
    </location>
</feature>
<feature type="site" description="Important for substrate specificity" evidence="1">
    <location>
        <position position="13"/>
    </location>
</feature>
<feature type="site" description="Important for substrate specificity" evidence="1">
    <location>
        <position position="82"/>
    </location>
</feature>
<feature type="site" description="Important for substrate specificity" evidence="1">
    <location>
        <position position="164"/>
    </location>
</feature>
<protein>
    <recommendedName>
        <fullName evidence="1">dTTP/UTP pyrophosphatase</fullName>
        <shortName evidence="1">dTTPase/UTPase</shortName>
        <ecNumber evidence="1">3.6.1.9</ecNumber>
    </recommendedName>
    <alternativeName>
        <fullName evidence="1">Nucleoside triphosphate pyrophosphatase</fullName>
    </alternativeName>
    <alternativeName>
        <fullName evidence="1">Nucleotide pyrophosphatase</fullName>
        <shortName evidence="1">Nucleotide PPase</shortName>
    </alternativeName>
</protein>
<comment type="function">
    <text evidence="1">Nucleoside triphosphate pyrophosphatase that hydrolyzes dTTP and UTP. May have a dual role in cell division arrest and in preventing the incorporation of modified nucleotides into cellular nucleic acids.</text>
</comment>
<comment type="catalytic activity">
    <reaction evidence="1">
        <text>dTTP + H2O = dTMP + diphosphate + H(+)</text>
        <dbReference type="Rhea" id="RHEA:28534"/>
        <dbReference type="ChEBI" id="CHEBI:15377"/>
        <dbReference type="ChEBI" id="CHEBI:15378"/>
        <dbReference type="ChEBI" id="CHEBI:33019"/>
        <dbReference type="ChEBI" id="CHEBI:37568"/>
        <dbReference type="ChEBI" id="CHEBI:63528"/>
        <dbReference type="EC" id="3.6.1.9"/>
    </reaction>
</comment>
<comment type="catalytic activity">
    <reaction evidence="1">
        <text>UTP + H2O = UMP + diphosphate + H(+)</text>
        <dbReference type="Rhea" id="RHEA:29395"/>
        <dbReference type="ChEBI" id="CHEBI:15377"/>
        <dbReference type="ChEBI" id="CHEBI:15378"/>
        <dbReference type="ChEBI" id="CHEBI:33019"/>
        <dbReference type="ChEBI" id="CHEBI:46398"/>
        <dbReference type="ChEBI" id="CHEBI:57865"/>
        <dbReference type="EC" id="3.6.1.9"/>
    </reaction>
</comment>
<comment type="cofactor">
    <cofactor evidence="1">
        <name>a divalent metal cation</name>
        <dbReference type="ChEBI" id="CHEBI:60240"/>
    </cofactor>
</comment>
<comment type="subcellular location">
    <subcellularLocation>
        <location evidence="1">Cytoplasm</location>
    </subcellularLocation>
</comment>
<comment type="similarity">
    <text evidence="1">Belongs to the Maf family. YhdE subfamily.</text>
</comment>
<reference key="1">
    <citation type="journal article" date="2010" name="PLoS ONE">
        <title>The complete multipartite genome sequence of Cupriavidus necator JMP134, a versatile pollutant degrader.</title>
        <authorList>
            <person name="Lykidis A."/>
            <person name="Perez-Pantoja D."/>
            <person name="Ledger T."/>
            <person name="Mavromatis K."/>
            <person name="Anderson I.J."/>
            <person name="Ivanova N.N."/>
            <person name="Hooper S.D."/>
            <person name="Lapidus A."/>
            <person name="Lucas S."/>
            <person name="Gonzalez B."/>
            <person name="Kyrpides N.C."/>
        </authorList>
    </citation>
    <scope>NUCLEOTIDE SEQUENCE [LARGE SCALE GENOMIC DNA]</scope>
    <source>
        <strain>JMP134 / LMG 1197</strain>
    </source>
</reference>
<sequence length="200" mass="21746">MHDYLYLASQSPRRRELLTQLGVRYELLLADDEEDAEALEVVQPGETPDDYVQRVCALKAEAALRRRERRALPDAPILTSDTTVCLGGEILGKPGDGADASAMLKALSGSTHRVLTAVTVVSTLGMHHALSISRVTFRAMTAAEIERYVDSGEPLGKAGAYGIQGRAAEFVERIEGSYSGIMGLPLFETAALLRQARLRF</sequence>